<sequence length="191" mass="21728">MGGSGSRLSKELLAEYQDLTFLTKQEILLAHRRFCELLPQEHRSVEESLQARVSLEQILSLPELKANPFKERICKVFSTSPSRDSLSFEDFLDLLSVFSDTATPDIKSHYAFRIFDFDDDGTLNREDLSQLVNCLTGESEDTRLSASEMKQLIDNILEESDIDRDGTINLSEFQHVISRSPDFASSFKIVL</sequence>
<proteinExistence type="evidence at transcript level"/>
<accession>Q17QE5</accession>
<dbReference type="EMBL" id="BC118410">
    <property type="protein sequence ID" value="AAI18411.1"/>
    <property type="molecule type" value="mRNA"/>
</dbReference>
<dbReference type="RefSeq" id="NP_001068901.1">
    <property type="nucleotide sequence ID" value="NM_001075433.2"/>
</dbReference>
<dbReference type="SMR" id="Q17QE5"/>
<dbReference type="FunCoup" id="Q17QE5">
    <property type="interactions" value="276"/>
</dbReference>
<dbReference type="STRING" id="9913.ENSBTAP00000066513"/>
<dbReference type="PaxDb" id="9913-ENSBTAP00000028350"/>
<dbReference type="Ensembl" id="ENSBTAT00000028350.4">
    <property type="protein sequence ID" value="ENSBTAP00000028350.3"/>
    <property type="gene ID" value="ENSBTAG00000021275.5"/>
</dbReference>
<dbReference type="GeneID" id="510141"/>
<dbReference type="KEGG" id="bta:510141"/>
<dbReference type="CTD" id="10519"/>
<dbReference type="VEuPathDB" id="HostDB:ENSBTAG00000021275"/>
<dbReference type="VGNC" id="VGNC:27359">
    <property type="gene designation" value="CIB1"/>
</dbReference>
<dbReference type="eggNOG" id="KOG0034">
    <property type="taxonomic scope" value="Eukaryota"/>
</dbReference>
<dbReference type="GeneTree" id="ENSGT00940000158927"/>
<dbReference type="HOGENOM" id="CLU_061288_6_1_1"/>
<dbReference type="InParanoid" id="Q17QE5"/>
<dbReference type="OMA" id="HAHQKFK"/>
<dbReference type="OrthoDB" id="114727at2759"/>
<dbReference type="TreeFam" id="TF313865"/>
<dbReference type="Proteomes" id="UP000009136">
    <property type="component" value="Chromosome 21"/>
</dbReference>
<dbReference type="Bgee" id="ENSBTAG00000021275">
    <property type="expression patterns" value="Expressed in abomasum and 104 other cell types or tissues"/>
</dbReference>
<dbReference type="GO" id="GO:0016324">
    <property type="term" value="C:apical plasma membrane"/>
    <property type="evidence" value="ECO:0007669"/>
    <property type="project" value="UniProtKB-SubCell"/>
</dbReference>
<dbReference type="GO" id="GO:0030424">
    <property type="term" value="C:axon"/>
    <property type="evidence" value="ECO:0000318"/>
    <property type="project" value="GO_Central"/>
</dbReference>
<dbReference type="GO" id="GO:0071944">
    <property type="term" value="C:cell periphery"/>
    <property type="evidence" value="ECO:0000250"/>
    <property type="project" value="UniProtKB"/>
</dbReference>
<dbReference type="GO" id="GO:0005813">
    <property type="term" value="C:centrosome"/>
    <property type="evidence" value="ECO:0000250"/>
    <property type="project" value="UniProtKB"/>
</dbReference>
<dbReference type="GO" id="GO:0005737">
    <property type="term" value="C:cytoplasm"/>
    <property type="evidence" value="ECO:0000250"/>
    <property type="project" value="UniProtKB"/>
</dbReference>
<dbReference type="GO" id="GO:0005783">
    <property type="term" value="C:endoplasmic reticulum"/>
    <property type="evidence" value="ECO:0007669"/>
    <property type="project" value="Ensembl"/>
</dbReference>
<dbReference type="GO" id="GO:0032433">
    <property type="term" value="C:filopodium tip"/>
    <property type="evidence" value="ECO:0000250"/>
    <property type="project" value="UniProtKB"/>
</dbReference>
<dbReference type="GO" id="GO:0030426">
    <property type="term" value="C:growth cone"/>
    <property type="evidence" value="ECO:0000250"/>
    <property type="project" value="UniProtKB"/>
</dbReference>
<dbReference type="GO" id="GO:0030027">
    <property type="term" value="C:lamellipodium"/>
    <property type="evidence" value="ECO:0000250"/>
    <property type="project" value="UniProtKB"/>
</dbReference>
<dbReference type="GO" id="GO:0043005">
    <property type="term" value="C:neuron projection"/>
    <property type="evidence" value="ECO:0000250"/>
    <property type="project" value="UniProtKB"/>
</dbReference>
<dbReference type="GO" id="GO:0043025">
    <property type="term" value="C:neuronal cell body"/>
    <property type="evidence" value="ECO:0000250"/>
    <property type="project" value="UniProtKB"/>
</dbReference>
<dbReference type="GO" id="GO:0016604">
    <property type="term" value="C:nuclear body"/>
    <property type="evidence" value="ECO:0007669"/>
    <property type="project" value="Ensembl"/>
</dbReference>
<dbReference type="GO" id="GO:0005634">
    <property type="term" value="C:nucleus"/>
    <property type="evidence" value="ECO:0000250"/>
    <property type="project" value="UniProtKB"/>
</dbReference>
<dbReference type="GO" id="GO:0043204">
    <property type="term" value="C:perikaryon"/>
    <property type="evidence" value="ECO:0007669"/>
    <property type="project" value="UniProtKB-SubCell"/>
</dbReference>
<dbReference type="GO" id="GO:0048471">
    <property type="term" value="C:perinuclear region of cytoplasm"/>
    <property type="evidence" value="ECO:0000250"/>
    <property type="project" value="UniProtKB"/>
</dbReference>
<dbReference type="GO" id="GO:0005886">
    <property type="term" value="C:plasma membrane"/>
    <property type="evidence" value="ECO:0000250"/>
    <property type="project" value="UniProtKB"/>
</dbReference>
<dbReference type="GO" id="GO:0032587">
    <property type="term" value="C:ruffle membrane"/>
    <property type="evidence" value="ECO:0007669"/>
    <property type="project" value="UniProtKB-SubCell"/>
</dbReference>
<dbReference type="GO" id="GO:0042383">
    <property type="term" value="C:sarcolemma"/>
    <property type="evidence" value="ECO:0000318"/>
    <property type="project" value="GO_Central"/>
</dbReference>
<dbReference type="GO" id="GO:0005509">
    <property type="term" value="F:calcium ion binding"/>
    <property type="evidence" value="ECO:0000318"/>
    <property type="project" value="GO_Central"/>
</dbReference>
<dbReference type="GO" id="GO:0008427">
    <property type="term" value="F:calcium-dependent protein kinase inhibitor activity"/>
    <property type="evidence" value="ECO:0007669"/>
    <property type="project" value="Ensembl"/>
</dbReference>
<dbReference type="GO" id="GO:0000287">
    <property type="term" value="F:magnesium ion binding"/>
    <property type="evidence" value="ECO:0000318"/>
    <property type="project" value="GO_Central"/>
</dbReference>
<dbReference type="GO" id="GO:0043495">
    <property type="term" value="F:protein-membrane adaptor activity"/>
    <property type="evidence" value="ECO:0000318"/>
    <property type="project" value="GO_Central"/>
</dbReference>
<dbReference type="GO" id="GO:0031267">
    <property type="term" value="F:small GTPase binding"/>
    <property type="evidence" value="ECO:0007669"/>
    <property type="project" value="Ensembl"/>
</dbReference>
<dbReference type="GO" id="GO:0044325">
    <property type="term" value="F:transmembrane transporter binding"/>
    <property type="evidence" value="ECO:0007669"/>
    <property type="project" value="Ensembl"/>
</dbReference>
<dbReference type="GO" id="GO:0001525">
    <property type="term" value="P:angiogenesis"/>
    <property type="evidence" value="ECO:0007669"/>
    <property type="project" value="UniProtKB-KW"/>
</dbReference>
<dbReference type="GO" id="GO:0006915">
    <property type="term" value="P:apoptotic process"/>
    <property type="evidence" value="ECO:0007669"/>
    <property type="project" value="UniProtKB-KW"/>
</dbReference>
<dbReference type="GO" id="GO:0007155">
    <property type="term" value="P:cell adhesion"/>
    <property type="evidence" value="ECO:0007669"/>
    <property type="project" value="UniProtKB-KW"/>
</dbReference>
<dbReference type="GO" id="GO:0051301">
    <property type="term" value="P:cell division"/>
    <property type="evidence" value="ECO:0007669"/>
    <property type="project" value="UniProtKB-KW"/>
</dbReference>
<dbReference type="GO" id="GO:0071363">
    <property type="term" value="P:cellular response to growth factor stimulus"/>
    <property type="evidence" value="ECO:0000250"/>
    <property type="project" value="UniProtKB"/>
</dbReference>
<dbReference type="GO" id="GO:1990090">
    <property type="term" value="P:cellular response to nerve growth factor stimulus"/>
    <property type="evidence" value="ECO:0000250"/>
    <property type="project" value="UniProtKB"/>
</dbReference>
<dbReference type="GO" id="GO:0071356">
    <property type="term" value="P:cellular response to tumor necrosis factor"/>
    <property type="evidence" value="ECO:0000250"/>
    <property type="project" value="UniProtKB"/>
</dbReference>
<dbReference type="GO" id="GO:0031122">
    <property type="term" value="P:cytoplasmic microtubule organization"/>
    <property type="evidence" value="ECO:0000250"/>
    <property type="project" value="UniProtKB"/>
</dbReference>
<dbReference type="GO" id="GO:0006974">
    <property type="term" value="P:DNA damage response"/>
    <property type="evidence" value="ECO:0007669"/>
    <property type="project" value="Ensembl"/>
</dbReference>
<dbReference type="GO" id="GO:0007113">
    <property type="term" value="P:endomitotic cell cycle"/>
    <property type="evidence" value="ECO:0000250"/>
    <property type="project" value="UniProtKB"/>
</dbReference>
<dbReference type="GO" id="GO:0043066">
    <property type="term" value="P:negative regulation of apoptotic process"/>
    <property type="evidence" value="ECO:0000250"/>
    <property type="project" value="UniProtKB"/>
</dbReference>
<dbReference type="GO" id="GO:0008285">
    <property type="term" value="P:negative regulation of cell population proliferation"/>
    <property type="evidence" value="ECO:0000250"/>
    <property type="project" value="UniProtKB"/>
</dbReference>
<dbReference type="GO" id="GO:0045653">
    <property type="term" value="P:negative regulation of megakaryocyte differentiation"/>
    <property type="evidence" value="ECO:0000250"/>
    <property type="project" value="UniProtKB"/>
</dbReference>
<dbReference type="GO" id="GO:0007026">
    <property type="term" value="P:negative regulation of microtubule depolymerization"/>
    <property type="evidence" value="ECO:0000250"/>
    <property type="project" value="UniProtKB"/>
</dbReference>
<dbReference type="GO" id="GO:0010977">
    <property type="term" value="P:negative regulation of neuron projection development"/>
    <property type="evidence" value="ECO:0000250"/>
    <property type="project" value="UniProtKB"/>
</dbReference>
<dbReference type="GO" id="GO:0051898">
    <property type="term" value="P:negative regulation of phosphatidylinositol 3-kinase/protein kinase B signal transduction"/>
    <property type="evidence" value="ECO:0000250"/>
    <property type="project" value="UniProtKB"/>
</dbReference>
<dbReference type="GO" id="GO:0001933">
    <property type="term" value="P:negative regulation of protein phosphorylation"/>
    <property type="evidence" value="ECO:0000250"/>
    <property type="project" value="UniProtKB"/>
</dbReference>
<dbReference type="GO" id="GO:0030220">
    <property type="term" value="P:platelet formation"/>
    <property type="evidence" value="ECO:0000250"/>
    <property type="project" value="UniProtKB"/>
</dbReference>
<dbReference type="GO" id="GO:0070886">
    <property type="term" value="P:positive regulation of calcineurin-NFAT signaling cascade"/>
    <property type="evidence" value="ECO:0000318"/>
    <property type="project" value="GO_Central"/>
</dbReference>
<dbReference type="GO" id="GO:0043085">
    <property type="term" value="P:positive regulation of catalytic activity"/>
    <property type="evidence" value="ECO:0000250"/>
    <property type="project" value="UniProtKB"/>
</dbReference>
<dbReference type="GO" id="GO:0033630">
    <property type="term" value="P:positive regulation of cell adhesion mediated by integrin"/>
    <property type="evidence" value="ECO:0000250"/>
    <property type="project" value="UniProtKB"/>
</dbReference>
<dbReference type="GO" id="GO:0030307">
    <property type="term" value="P:positive regulation of cell growth"/>
    <property type="evidence" value="ECO:0000250"/>
    <property type="project" value="UniProtKB"/>
</dbReference>
<dbReference type="GO" id="GO:0030335">
    <property type="term" value="P:positive regulation of cell migration"/>
    <property type="evidence" value="ECO:0000250"/>
    <property type="project" value="UniProtKB"/>
</dbReference>
<dbReference type="GO" id="GO:0090050">
    <property type="term" value="P:positive regulation of cell migration involved in sprouting angiogenesis"/>
    <property type="evidence" value="ECO:0000250"/>
    <property type="project" value="UniProtKB"/>
</dbReference>
<dbReference type="GO" id="GO:0008284">
    <property type="term" value="P:positive regulation of cell population proliferation"/>
    <property type="evidence" value="ECO:0000250"/>
    <property type="project" value="UniProtKB"/>
</dbReference>
<dbReference type="GO" id="GO:0001954">
    <property type="term" value="P:positive regulation of cell-matrix adhesion"/>
    <property type="evidence" value="ECO:0000250"/>
    <property type="project" value="UniProtKB"/>
</dbReference>
<dbReference type="GO" id="GO:0070374">
    <property type="term" value="P:positive regulation of ERK1 and ERK2 cascade"/>
    <property type="evidence" value="ECO:0000250"/>
    <property type="project" value="UniProtKB"/>
</dbReference>
<dbReference type="GO" id="GO:2000256">
    <property type="term" value="P:positive regulation of male germ cell proliferation"/>
    <property type="evidence" value="ECO:0000250"/>
    <property type="project" value="UniProtKB"/>
</dbReference>
<dbReference type="GO" id="GO:0051092">
    <property type="term" value="P:positive regulation of NF-kappaB transcription factor activity"/>
    <property type="evidence" value="ECO:0000250"/>
    <property type="project" value="UniProtKB"/>
</dbReference>
<dbReference type="GO" id="GO:1903078">
    <property type="term" value="P:positive regulation of protein localization to plasma membrane"/>
    <property type="evidence" value="ECO:0000318"/>
    <property type="project" value="GO_Central"/>
</dbReference>
<dbReference type="GO" id="GO:0001934">
    <property type="term" value="P:positive regulation of protein phosphorylation"/>
    <property type="evidence" value="ECO:0000250"/>
    <property type="project" value="UniProtKB"/>
</dbReference>
<dbReference type="GO" id="GO:0071902">
    <property type="term" value="P:positive regulation of protein serine/threonine kinase activity"/>
    <property type="evidence" value="ECO:0000250"/>
    <property type="project" value="UniProtKB"/>
</dbReference>
<dbReference type="GO" id="GO:0090314">
    <property type="term" value="P:positive regulation of protein targeting to membrane"/>
    <property type="evidence" value="ECO:0000250"/>
    <property type="project" value="UniProtKB"/>
</dbReference>
<dbReference type="GO" id="GO:1900026">
    <property type="term" value="P:positive regulation of substrate adhesion-dependent cell spreading"/>
    <property type="evidence" value="ECO:0000250"/>
    <property type="project" value="UniProtKB"/>
</dbReference>
<dbReference type="GO" id="GO:0051302">
    <property type="term" value="P:regulation of cell division"/>
    <property type="evidence" value="ECO:0000250"/>
    <property type="project" value="UniProtKB"/>
</dbReference>
<dbReference type="GO" id="GO:0042127">
    <property type="term" value="P:regulation of cell population proliferation"/>
    <property type="evidence" value="ECO:0000250"/>
    <property type="project" value="UniProtKB"/>
</dbReference>
<dbReference type="GO" id="GO:0002931">
    <property type="term" value="P:response to ischemia"/>
    <property type="evidence" value="ECO:0000250"/>
    <property type="project" value="UniProtKB"/>
</dbReference>
<dbReference type="GO" id="GO:0007286">
    <property type="term" value="P:spermatid development"/>
    <property type="evidence" value="ECO:0000250"/>
    <property type="project" value="UniProtKB"/>
</dbReference>
<dbReference type="GO" id="GO:0038163">
    <property type="term" value="P:thrombopoietin-mediated signaling pathway"/>
    <property type="evidence" value="ECO:0000250"/>
    <property type="project" value="UniProtKB"/>
</dbReference>
<dbReference type="CDD" id="cd00051">
    <property type="entry name" value="EFh"/>
    <property type="match status" value="1"/>
</dbReference>
<dbReference type="FunFam" id="1.10.238.10:FF:000079">
    <property type="entry name" value="Calcium and integrin-binding family member 2"/>
    <property type="match status" value="1"/>
</dbReference>
<dbReference type="Gene3D" id="1.10.238.10">
    <property type="entry name" value="EF-hand"/>
    <property type="match status" value="2"/>
</dbReference>
<dbReference type="InterPro" id="IPR051433">
    <property type="entry name" value="CIBP"/>
</dbReference>
<dbReference type="InterPro" id="IPR011992">
    <property type="entry name" value="EF-hand-dom_pair"/>
</dbReference>
<dbReference type="InterPro" id="IPR018247">
    <property type="entry name" value="EF_Hand_1_Ca_BS"/>
</dbReference>
<dbReference type="InterPro" id="IPR002048">
    <property type="entry name" value="EF_hand_dom"/>
</dbReference>
<dbReference type="PANTHER" id="PTHR45791">
    <property type="entry name" value="CALCIUM AND INTEGRIN BINDING FAMILY MEMBER 2"/>
    <property type="match status" value="1"/>
</dbReference>
<dbReference type="PANTHER" id="PTHR45791:SF3">
    <property type="entry name" value="CALCIUM AND INTEGRIN-BINDING PROTEIN 1"/>
    <property type="match status" value="1"/>
</dbReference>
<dbReference type="Pfam" id="PF13499">
    <property type="entry name" value="EF-hand_7"/>
    <property type="match status" value="1"/>
</dbReference>
<dbReference type="SMART" id="SM00054">
    <property type="entry name" value="EFh"/>
    <property type="match status" value="2"/>
</dbReference>
<dbReference type="SUPFAM" id="SSF47473">
    <property type="entry name" value="EF-hand"/>
    <property type="match status" value="1"/>
</dbReference>
<dbReference type="PROSITE" id="PS00018">
    <property type="entry name" value="EF_HAND_1"/>
    <property type="match status" value="2"/>
</dbReference>
<dbReference type="PROSITE" id="PS50222">
    <property type="entry name" value="EF_HAND_2"/>
    <property type="match status" value="2"/>
</dbReference>
<name>CIB1_BOVIN</name>
<gene>
    <name type="primary">CIB1</name>
</gene>
<reference key="1">
    <citation type="submission" date="2006-06" db="EMBL/GenBank/DDBJ databases">
        <authorList>
            <consortium name="NIH - Mammalian Gene Collection (MGC) project"/>
        </authorList>
    </citation>
    <scope>NUCLEOTIDE SEQUENCE [LARGE SCALE MRNA]</scope>
    <source>
        <strain>Hereford</strain>
        <tissue>Fetal pons</tissue>
    </source>
</reference>
<feature type="initiator methionine" description="Removed" evidence="2">
    <location>
        <position position="1"/>
    </location>
</feature>
<feature type="chain" id="PRO_0000292943" description="Calcium and integrin-binding protein 1">
    <location>
        <begin position="2"/>
        <end position="191"/>
    </location>
</feature>
<feature type="domain" description="EF-hand 1" evidence="3">
    <location>
        <begin position="103"/>
        <end position="138"/>
    </location>
</feature>
<feature type="domain" description="EF-hand 2" evidence="3">
    <location>
        <begin position="148"/>
        <end position="183"/>
    </location>
</feature>
<feature type="binding site" evidence="3">
    <location>
        <position position="116"/>
    </location>
    <ligand>
        <name>Ca(2+)</name>
        <dbReference type="ChEBI" id="CHEBI:29108"/>
        <label>1</label>
    </ligand>
</feature>
<feature type="binding site" evidence="3">
    <location>
        <position position="118"/>
    </location>
    <ligand>
        <name>Ca(2+)</name>
        <dbReference type="ChEBI" id="CHEBI:29108"/>
        <label>1</label>
    </ligand>
</feature>
<feature type="binding site" evidence="3">
    <location>
        <position position="120"/>
    </location>
    <ligand>
        <name>Ca(2+)</name>
        <dbReference type="ChEBI" id="CHEBI:29108"/>
        <label>1</label>
    </ligand>
</feature>
<feature type="binding site" evidence="3">
    <location>
        <position position="122"/>
    </location>
    <ligand>
        <name>Ca(2+)</name>
        <dbReference type="ChEBI" id="CHEBI:29108"/>
        <label>1</label>
    </ligand>
</feature>
<feature type="binding site" evidence="3">
    <location>
        <position position="127"/>
    </location>
    <ligand>
        <name>Ca(2+)</name>
        <dbReference type="ChEBI" id="CHEBI:29108"/>
        <label>1</label>
    </ligand>
</feature>
<feature type="binding site" evidence="3">
    <location>
        <position position="161"/>
    </location>
    <ligand>
        <name>Ca(2+)</name>
        <dbReference type="ChEBI" id="CHEBI:29108"/>
        <label>2</label>
    </ligand>
</feature>
<feature type="binding site" evidence="3">
    <location>
        <position position="163"/>
    </location>
    <ligand>
        <name>Ca(2+)</name>
        <dbReference type="ChEBI" id="CHEBI:29108"/>
        <label>2</label>
    </ligand>
</feature>
<feature type="binding site" evidence="3">
    <location>
        <position position="165"/>
    </location>
    <ligand>
        <name>Ca(2+)</name>
        <dbReference type="ChEBI" id="CHEBI:29108"/>
        <label>2</label>
    </ligand>
</feature>
<feature type="binding site" evidence="3">
    <location>
        <position position="167"/>
    </location>
    <ligand>
        <name>Ca(2+)</name>
        <dbReference type="ChEBI" id="CHEBI:29108"/>
        <label>2</label>
    </ligand>
</feature>
<feature type="binding site" evidence="3">
    <location>
        <position position="172"/>
    </location>
    <ligand>
        <name>Ca(2+)</name>
        <dbReference type="ChEBI" id="CHEBI:29108"/>
        <label>2</label>
    </ligand>
</feature>
<feature type="lipid moiety-binding region" description="N-myristoyl glycine" evidence="1">
    <location>
        <position position="2"/>
    </location>
</feature>
<keyword id="KW-0037">Angiogenesis</keyword>
<keyword id="KW-0053">Apoptosis</keyword>
<keyword id="KW-0106">Calcium</keyword>
<keyword id="KW-0130">Cell adhesion</keyword>
<keyword id="KW-0131">Cell cycle</keyword>
<keyword id="KW-0132">Cell division</keyword>
<keyword id="KW-1003">Cell membrane</keyword>
<keyword id="KW-0966">Cell projection</keyword>
<keyword id="KW-0963">Cytoplasm</keyword>
<keyword id="KW-0206">Cytoskeleton</keyword>
<keyword id="KW-0221">Differentiation</keyword>
<keyword id="KW-0449">Lipoprotein</keyword>
<keyword id="KW-0460">Magnesium</keyword>
<keyword id="KW-0472">Membrane</keyword>
<keyword id="KW-0479">Metal-binding</keyword>
<keyword id="KW-0519">Myristate</keyword>
<keyword id="KW-0539">Nucleus</keyword>
<keyword id="KW-1185">Reference proteome</keyword>
<keyword id="KW-0677">Repeat</keyword>
<keyword id="KW-0744">Spermatogenesis</keyword>
<comment type="function">
    <text evidence="1 2">Calcium-binding protein that plays a role in the regulation of numerous cellular processes, such as cell differentiation, cell division, cell proliferation, cell migration, thrombosis, angiogenesis, cardiac hypertrophy and apoptosis. Involved in bone marrow megakaryocyte differentiation by negatively regulating thrombopoietin-mediated signaling pathway. Participates in the endomitotic cell cycle of megakaryocyte, a form of mitosis in which both karyokinesis and cytokinesis are interrupted. Plays a role in integrin signaling by negatively regulating alpha-IIb/beta3 activation in thrombin-stimulated megakaryocytes preventing platelet aggregation. Up-regulates PTK2/FAK1 activity, and is also needed for the recruitment of PTK2/FAK1 to focal adhesions; it thus appears to play an important role in focal adhesion formation. Positively regulates cell migration on fibronectin in a CDC42-dependent manner, the effect being negatively regulated by PAK1. Functions as a negative regulator of stress activated MAP kinase (MAPK) signaling pathways. Down-regulates inositol 1,4,5-trisphosphate receptor-dependent calcium signaling. Involved in sphingosine kinase SPHK1 translocation to the plasma membrane in a N-myristoylation-dependent manner preventing TNF-alpha-induced apoptosis. Regulates serine/threonine-protein kinase PLK3 activity for proper completion of cell division progression. Plays a role in microtubule (MT) dynamics during neuronal development; disrupts the MT depolymerization activity of STMN2 attenuating NGF-induced neurite outgrowth and the MT reorganization at the edge of lamellipodia. Promotes cardiomyocyte hypertrophy via activation of the calcineurin/NFAT signaling pathway. Stimulates calcineurin PPP3R1 activity by mediating its anchoring to the sarcolemma. In ischemia-induced (pathological or adaptive) angiogenesis, stimulates endothelial cell proliferation, migration and microvessel formation by activating the PAK1 and ERK1/ERK2 signaling pathway. Also promotes cancer cell survival and proliferation. May regulate cell cycle and differentiation of spermatogenic germ cells, and/or differentiation of supporting Sertoli cells (By similarity). Forms a complex with TMC6/EVER1 and TMC8/EVER2 in lymphocytes and keratynocytes where CIB1 stabilizes TMC6 and TMC8 levels and reciprocally (By similarity).</text>
</comment>
<comment type="subunit">
    <text evidence="1 2">Monomer. Interacts with the heterodimeric integrin alpha-IIb/beta3 (ITGA2B-ITGB3). Interacts with ITGA2B (via cytoplasmic domain); the interaction is direct and calcium-dependent. Interacts with the protein kinases PLK2/SNK and PRKDC (via the region immediately upstream of the kinase domain). Interacts with PLK3; the interaction inhibits PLK3 kinase activity. Interacts with PSEN2. Interacts (via C-terminus) with F8. Interacts with NBR1 (via C-terminus). Interacts with FEZ1 (via C-terminus). Interacts with UBR5 (via C-terminus); the interaction is sensitive to DNA damage, and may target CIB1 for ubiquitin-mediated degradation. Interacts with IFI6; the interaction is direct. Interacts with BCL2. Interacts with ITPR3; the interaction occurs in a calcium dependent manner. Interacts with PTK2/FAK1. Interacts with MAP3K5; the interaction inhibits MAP3K5 activation by phosphorylation, and its subsequent interaction with TRAF2. Interacts (via C-terminal region) with STMN2 (via the N-terminal region); the interaction is direct, occurs in a calcium-dependent manner and attenuates the STMN2-induced neurite outgrowth inhibition. Interacts with SPHK1, the interaction occurs in a calcium-dependent manner. Interacts with ITGA2B (via C-terminal cytoplasmic tail); the interaction occurs upon platelet aggregation and is stabilized/increased in a calcium and magnesium-dependent manner. Interacts with PAK1 (via N-terminal region); the interaction is direct and occurs in a calcium-dependent manner. Interacts with RAC3 (via C-terminal region); the interaction induces their association with the cytoskeleton upon alpha-IIb/beta3 integrin-mediated adhesion. Interacts with ITGA5 and ITGAV. Interacts with MYO1C. Interacts with ITGA2B (via C-terminal cytoplasmic tail region). Interacts (via C-terminal region) with PPP3R1; the interaction increases upon cardiomyocytes hypertrophy. Interacts with CACNA1C; the interaction increases upon cardiomyocytes hypertrophy. Interacts with TAS1R2 (via C-terminus); this interaction is independent of the myristoylation state of CIB1 (By similarity). Interacts and forms a complex with TMC6 and TMC8; the interaction stabilizes each component of the complex (By similarity).</text>
</comment>
<comment type="subcellular location">
    <subcellularLocation>
        <location evidence="2">Membrane</location>
        <topology evidence="2">Lipid-anchor</topology>
    </subcellularLocation>
    <subcellularLocation>
        <location evidence="2">Cell membrane</location>
        <location evidence="2">Sarcolemma</location>
    </subcellularLocation>
    <subcellularLocation>
        <location evidence="2">Cell membrane</location>
    </subcellularLocation>
    <subcellularLocation>
        <location evidence="2">Apical cell membrane</location>
    </subcellularLocation>
    <subcellularLocation>
        <location evidence="2">Cell projection</location>
        <location evidence="2">Ruffle membrane</location>
    </subcellularLocation>
    <subcellularLocation>
        <location evidence="2">Cell projection</location>
        <location evidence="2">Filopodium tip</location>
    </subcellularLocation>
    <subcellularLocation>
        <location evidence="2">Cell projection</location>
        <location evidence="2">Growth cone</location>
    </subcellularLocation>
    <subcellularLocation>
        <location evidence="2">Cell projection</location>
        <location evidence="2">Lamellipodium</location>
    </subcellularLocation>
    <subcellularLocation>
        <location evidence="2">Cytoplasm</location>
    </subcellularLocation>
    <subcellularLocation>
        <location evidence="2">Cytoplasm</location>
        <location evidence="2">Cytoskeleton</location>
    </subcellularLocation>
    <subcellularLocation>
        <location evidence="2">Cytoplasm</location>
        <location evidence="2">Cytoskeleton</location>
        <location evidence="2">Microtubule organizing center</location>
        <location evidence="2">Centrosome</location>
    </subcellularLocation>
    <subcellularLocation>
        <location evidence="2">Cytoplasm</location>
        <location evidence="2">Perinuclear region</location>
    </subcellularLocation>
    <subcellularLocation>
        <location evidence="2">Nucleus</location>
    </subcellularLocation>
    <subcellularLocation>
        <location evidence="2">Cell projection</location>
        <location evidence="2">Neuron projection</location>
    </subcellularLocation>
    <subcellularLocation>
        <location evidence="2">Perikaryon</location>
    </subcellularLocation>
    <text evidence="1">Colocalized with PPP3R1 at the cell membrane of cardiomyocytes in the hypertrophic heart (By similarity). Colocalized with NBR1 to the perinuclear region. Colocalizes with TAS1R2 in apical regions of taste receptor cells. Colocalized with RAC3 in the perinuclear area and at the cell periphery. Colocalized with PAK1 within membrane ruffles during cell spreading upon readhesion to fibronectin. Redistributed to the cytoskeleton upon platelet aggregation. Translocates from the cytosol to the plasma membrane in a calcium-dependent manner. Colocalized with PLK3 at centrosomes in ductal breast carcinoma cells.</text>
</comment>
<comment type="domain">
    <text evidence="1">The EF-hands may also bind magnesium ions in the presence of high Mg(2+) levels and low Ca(2+) levels.</text>
</comment>
<comment type="miscellaneous">
    <text evidence="1">The binding of either calcium or magnesium significantly increases the structural stability of the protein in comparison to apo-CIB (calcium- and magnesium-free form).</text>
</comment>
<protein>
    <recommendedName>
        <fullName>Calcium and integrin-binding protein 1</fullName>
    </recommendedName>
    <alternativeName>
        <fullName>Calmyrin</fullName>
    </alternativeName>
</protein>
<evidence type="ECO:0000250" key="1"/>
<evidence type="ECO:0000250" key="2">
    <source>
        <dbReference type="UniProtKB" id="Q99828"/>
    </source>
</evidence>
<evidence type="ECO:0000255" key="3">
    <source>
        <dbReference type="PROSITE-ProRule" id="PRU00448"/>
    </source>
</evidence>
<organism>
    <name type="scientific">Bos taurus</name>
    <name type="common">Bovine</name>
    <dbReference type="NCBI Taxonomy" id="9913"/>
    <lineage>
        <taxon>Eukaryota</taxon>
        <taxon>Metazoa</taxon>
        <taxon>Chordata</taxon>
        <taxon>Craniata</taxon>
        <taxon>Vertebrata</taxon>
        <taxon>Euteleostomi</taxon>
        <taxon>Mammalia</taxon>
        <taxon>Eutheria</taxon>
        <taxon>Laurasiatheria</taxon>
        <taxon>Artiodactyla</taxon>
        <taxon>Ruminantia</taxon>
        <taxon>Pecora</taxon>
        <taxon>Bovidae</taxon>
        <taxon>Bovinae</taxon>
        <taxon>Bos</taxon>
    </lineage>
</organism>